<name>SGR2_ARATH</name>
<proteinExistence type="evidence at protein level"/>
<gene>
    <name evidence="12" type="primary">SGR2</name>
    <name evidence="9" type="synonym">NYE2</name>
    <name evidence="10" type="synonym">SGN2</name>
    <name evidence="15" type="ordered locus">At4g11910</name>
    <name evidence="16" type="ORF">T26M18.120</name>
</gene>
<dbReference type="EC" id="4.99.1.10" evidence="7"/>
<dbReference type="EMBL" id="AY699948">
    <property type="protein sequence ID" value="AAU05981.1"/>
    <property type="molecule type" value="mRNA"/>
</dbReference>
<dbReference type="EMBL" id="DQ437532">
    <property type="protein sequence ID" value="ABD77556.1"/>
    <property type="molecule type" value="mRNA"/>
</dbReference>
<dbReference type="EMBL" id="AL078606">
    <property type="protein sequence ID" value="CAB44329.1"/>
    <property type="status" value="ALT_SEQ"/>
    <property type="molecule type" value="Genomic_DNA"/>
</dbReference>
<dbReference type="EMBL" id="AL161533">
    <property type="protein sequence ID" value="CAB78234.1"/>
    <property type="status" value="ALT_SEQ"/>
    <property type="molecule type" value="Genomic_DNA"/>
</dbReference>
<dbReference type="EMBL" id="CP002687">
    <property type="protein sequence ID" value="AEE83068.1"/>
    <property type="molecule type" value="Genomic_DNA"/>
</dbReference>
<dbReference type="PIR" id="T09350">
    <property type="entry name" value="T09350"/>
</dbReference>
<dbReference type="RefSeq" id="NP_192928.2">
    <property type="nucleotide sequence ID" value="NM_117261.6"/>
</dbReference>
<dbReference type="SMR" id="Q66WT5"/>
<dbReference type="BioGRID" id="12096">
    <property type="interactions" value="1"/>
</dbReference>
<dbReference type="FunCoup" id="Q66WT5">
    <property type="interactions" value="29"/>
</dbReference>
<dbReference type="IntAct" id="Q66WT5">
    <property type="interactions" value="1"/>
</dbReference>
<dbReference type="MINT" id="Q66WT5"/>
<dbReference type="STRING" id="3702.Q66WT5"/>
<dbReference type="iPTMnet" id="Q66WT5"/>
<dbReference type="PaxDb" id="3702-AT4G11910.1"/>
<dbReference type="ProteomicsDB" id="232584"/>
<dbReference type="EnsemblPlants" id="AT4G11910.1">
    <property type="protein sequence ID" value="AT4G11910.1"/>
    <property type="gene ID" value="AT4G11910"/>
</dbReference>
<dbReference type="GeneID" id="826798"/>
<dbReference type="Gramene" id="AT4G11910.1">
    <property type="protein sequence ID" value="AT4G11910.1"/>
    <property type="gene ID" value="AT4G11910"/>
</dbReference>
<dbReference type="KEGG" id="ath:AT4G11910"/>
<dbReference type="Araport" id="AT4G11910"/>
<dbReference type="TAIR" id="AT4G11910">
    <property type="gene designation" value="NYE2"/>
</dbReference>
<dbReference type="eggNOG" id="ENOG502S3TG">
    <property type="taxonomic scope" value="Eukaryota"/>
</dbReference>
<dbReference type="HOGENOM" id="CLU_073517_0_0_1"/>
<dbReference type="InParanoid" id="Q66WT5"/>
<dbReference type="OMA" id="KDKMSLH"/>
<dbReference type="PhylomeDB" id="Q66WT5"/>
<dbReference type="PRO" id="PR:Q66WT5"/>
<dbReference type="Proteomes" id="UP000006548">
    <property type="component" value="Chromosome 4"/>
</dbReference>
<dbReference type="ExpressionAtlas" id="Q66WT5">
    <property type="expression patterns" value="baseline and differential"/>
</dbReference>
<dbReference type="GO" id="GO:0009535">
    <property type="term" value="C:chloroplast thylakoid membrane"/>
    <property type="evidence" value="ECO:0007669"/>
    <property type="project" value="UniProtKB-SubCell"/>
</dbReference>
<dbReference type="GO" id="GO:0055035">
    <property type="term" value="C:plastid thylakoid membrane"/>
    <property type="evidence" value="ECO:0000314"/>
    <property type="project" value="TAIR"/>
</dbReference>
<dbReference type="GO" id="GO:0016829">
    <property type="term" value="F:lyase activity"/>
    <property type="evidence" value="ECO:0007669"/>
    <property type="project" value="UniProtKB-KW"/>
</dbReference>
<dbReference type="GO" id="GO:0015996">
    <property type="term" value="P:chlorophyll catabolic process"/>
    <property type="evidence" value="ECO:0007669"/>
    <property type="project" value="UniProtKB-KW"/>
</dbReference>
<dbReference type="GO" id="GO:1903647">
    <property type="term" value="P:negative regulation of chlorophyll catabolic process"/>
    <property type="evidence" value="ECO:0000315"/>
    <property type="project" value="TAIR"/>
</dbReference>
<dbReference type="InterPro" id="IPR024438">
    <property type="entry name" value="Staygreen"/>
</dbReference>
<dbReference type="PANTHER" id="PTHR31750:SF17">
    <property type="entry name" value="MAGNESIUM DECHELATASE SGR2, CHLOROPLASTIC-RELATED"/>
    <property type="match status" value="1"/>
</dbReference>
<dbReference type="PANTHER" id="PTHR31750">
    <property type="entry name" value="PROTEIN STAY-GREEN 1, CHLOROPLASTIC-RELATED"/>
    <property type="match status" value="1"/>
</dbReference>
<dbReference type="Pfam" id="PF12638">
    <property type="entry name" value="Staygreen"/>
    <property type="match status" value="1"/>
</dbReference>
<evidence type="ECO:0000255" key="1"/>
<evidence type="ECO:0000269" key="2">
    <source>
    </source>
</evidence>
<evidence type="ECO:0000269" key="3">
    <source>
    </source>
</evidence>
<evidence type="ECO:0000269" key="4">
    <source>
    </source>
</evidence>
<evidence type="ECO:0000269" key="5">
    <source>
    </source>
</evidence>
<evidence type="ECO:0000269" key="6">
    <source>
    </source>
</evidence>
<evidence type="ECO:0000269" key="7">
    <source>
    </source>
</evidence>
<evidence type="ECO:0000269" key="8">
    <source>
    </source>
</evidence>
<evidence type="ECO:0000303" key="9">
    <source>
    </source>
</evidence>
<evidence type="ECO:0000303" key="10">
    <source>
    </source>
</evidence>
<evidence type="ECO:0000303" key="11">
    <source>
    </source>
</evidence>
<evidence type="ECO:0000303" key="12">
    <source>
    </source>
</evidence>
<evidence type="ECO:0000305" key="13"/>
<evidence type="ECO:0000305" key="14">
    <source>
    </source>
</evidence>
<evidence type="ECO:0000312" key="15">
    <source>
        <dbReference type="Araport" id="AT4G11910"/>
    </source>
</evidence>
<evidence type="ECO:0000312" key="16">
    <source>
        <dbReference type="EMBL" id="CAB44329.1"/>
    </source>
</evidence>
<feature type="transit peptide" description="Chloroplast" evidence="1">
    <location>
        <begin position="1"/>
        <end position="54"/>
    </location>
</feature>
<feature type="chain" id="PRO_0000425232" description="Magnesium dechelatase SGR2, chloroplastic">
    <location>
        <begin position="55"/>
        <end position="271"/>
    </location>
</feature>
<organism>
    <name type="scientific">Arabidopsis thaliana</name>
    <name type="common">Mouse-ear cress</name>
    <dbReference type="NCBI Taxonomy" id="3702"/>
    <lineage>
        <taxon>Eukaryota</taxon>
        <taxon>Viridiplantae</taxon>
        <taxon>Streptophyta</taxon>
        <taxon>Embryophyta</taxon>
        <taxon>Tracheophyta</taxon>
        <taxon>Spermatophyta</taxon>
        <taxon>Magnoliopsida</taxon>
        <taxon>eudicotyledons</taxon>
        <taxon>Gunneridae</taxon>
        <taxon>Pentapetalae</taxon>
        <taxon>rosids</taxon>
        <taxon>malvids</taxon>
        <taxon>Brassicales</taxon>
        <taxon>Brassicaceae</taxon>
        <taxon>Camelineae</taxon>
        <taxon>Arabidopsis</taxon>
    </lineage>
</organism>
<accession>Q66WT5</accession>
<accession>Q9T059</accession>
<protein>
    <recommendedName>
        <fullName evidence="13">Magnesium dechelatase SGR2, chloroplastic</fullName>
        <ecNumber evidence="7">4.99.1.10</ecNumber>
    </recommendedName>
    <alternativeName>
        <fullName evidence="9">Protein NONYELLOWING 2</fullName>
    </alternativeName>
    <alternativeName>
        <fullName evidence="11">Protein STAY-GREEN 2</fullName>
    </alternativeName>
    <alternativeName>
        <fullName evidence="10">Protein STAYGREEN 2</fullName>
    </alternativeName>
</protein>
<reference key="1">
    <citation type="journal article" date="2007" name="Plant Cell">
        <title>The senescence-induced staygreen protein regulates chlorophyll degradation.</title>
        <authorList>
            <person name="Park S.Y."/>
            <person name="Yu J.W."/>
            <person name="Park J.S."/>
            <person name="Li J."/>
            <person name="Yoo S.C."/>
            <person name="Lee N.Y."/>
            <person name="Lee S.K."/>
            <person name="Jeong S.W."/>
            <person name="Seo H.S."/>
            <person name="Koh H.J."/>
            <person name="Jeon J.S."/>
            <person name="Park Y.I."/>
            <person name="Paek N.C."/>
        </authorList>
    </citation>
    <scope>NUCLEOTIDE SEQUENCE [MRNA]</scope>
    <scope>FUNCTION</scope>
    <scope>DEVELOPMENTAL STAGE</scope>
    <source>
        <strain>cv. Columbia</strain>
    </source>
</reference>
<reference key="2">
    <citation type="journal article" date="2007" name="Plant Physiol.">
        <title>Identification of a novel chloroplast protein AtNYE1 regulating chlorophyll degradation during leaf senescence in Arabidopsis.</title>
        <authorList>
            <person name="Ren G."/>
            <person name="An K."/>
            <person name="Liao Y."/>
            <person name="Zhou X."/>
            <person name="Cao Y."/>
            <person name="Zhao H."/>
            <person name="Ge X."/>
            <person name="Kuai B."/>
        </authorList>
    </citation>
    <scope>NUCLEOTIDE SEQUENCE [MRNA]</scope>
</reference>
<reference key="3">
    <citation type="journal article" date="1999" name="Nature">
        <title>Sequence and analysis of chromosome 4 of the plant Arabidopsis thaliana.</title>
        <authorList>
            <person name="Mayer K.F.X."/>
            <person name="Schueller C."/>
            <person name="Wambutt R."/>
            <person name="Murphy G."/>
            <person name="Volckaert G."/>
            <person name="Pohl T."/>
            <person name="Duesterhoeft A."/>
            <person name="Stiekema W."/>
            <person name="Entian K.-D."/>
            <person name="Terryn N."/>
            <person name="Harris B."/>
            <person name="Ansorge W."/>
            <person name="Brandt P."/>
            <person name="Grivell L.A."/>
            <person name="Rieger M."/>
            <person name="Weichselgartner M."/>
            <person name="de Simone V."/>
            <person name="Obermaier B."/>
            <person name="Mache R."/>
            <person name="Mueller M."/>
            <person name="Kreis M."/>
            <person name="Delseny M."/>
            <person name="Puigdomenech P."/>
            <person name="Watson M."/>
            <person name="Schmidtheini T."/>
            <person name="Reichert B."/>
            <person name="Portetelle D."/>
            <person name="Perez-Alonso M."/>
            <person name="Boutry M."/>
            <person name="Bancroft I."/>
            <person name="Vos P."/>
            <person name="Hoheisel J."/>
            <person name="Zimmermann W."/>
            <person name="Wedler H."/>
            <person name="Ridley P."/>
            <person name="Langham S.-A."/>
            <person name="McCullagh B."/>
            <person name="Bilham L."/>
            <person name="Robben J."/>
            <person name="van der Schueren J."/>
            <person name="Grymonprez B."/>
            <person name="Chuang Y.-J."/>
            <person name="Vandenbussche F."/>
            <person name="Braeken M."/>
            <person name="Weltjens I."/>
            <person name="Voet M."/>
            <person name="Bastiaens I."/>
            <person name="Aert R."/>
            <person name="Defoor E."/>
            <person name="Weitzenegger T."/>
            <person name="Bothe G."/>
            <person name="Ramsperger U."/>
            <person name="Hilbert H."/>
            <person name="Braun M."/>
            <person name="Holzer E."/>
            <person name="Brandt A."/>
            <person name="Peters S."/>
            <person name="van Staveren M."/>
            <person name="Dirkse W."/>
            <person name="Mooijman P."/>
            <person name="Klein Lankhorst R."/>
            <person name="Rose M."/>
            <person name="Hauf J."/>
            <person name="Koetter P."/>
            <person name="Berneiser S."/>
            <person name="Hempel S."/>
            <person name="Feldpausch M."/>
            <person name="Lamberth S."/>
            <person name="Van den Daele H."/>
            <person name="De Keyser A."/>
            <person name="Buysshaert C."/>
            <person name="Gielen J."/>
            <person name="Villarroel R."/>
            <person name="De Clercq R."/>
            <person name="van Montagu M."/>
            <person name="Rogers J."/>
            <person name="Cronin A."/>
            <person name="Quail M.A."/>
            <person name="Bray-Allen S."/>
            <person name="Clark L."/>
            <person name="Doggett J."/>
            <person name="Hall S."/>
            <person name="Kay M."/>
            <person name="Lennard N."/>
            <person name="McLay K."/>
            <person name="Mayes R."/>
            <person name="Pettett A."/>
            <person name="Rajandream M.A."/>
            <person name="Lyne M."/>
            <person name="Benes V."/>
            <person name="Rechmann S."/>
            <person name="Borkova D."/>
            <person name="Bloecker H."/>
            <person name="Scharfe M."/>
            <person name="Grimm M."/>
            <person name="Loehnert T.-H."/>
            <person name="Dose S."/>
            <person name="de Haan M."/>
            <person name="Maarse A.C."/>
            <person name="Schaefer M."/>
            <person name="Mueller-Auer S."/>
            <person name="Gabel C."/>
            <person name="Fuchs M."/>
            <person name="Fartmann B."/>
            <person name="Granderath K."/>
            <person name="Dauner D."/>
            <person name="Herzl A."/>
            <person name="Neumann S."/>
            <person name="Argiriou A."/>
            <person name="Vitale D."/>
            <person name="Liguori R."/>
            <person name="Piravandi E."/>
            <person name="Massenet O."/>
            <person name="Quigley F."/>
            <person name="Clabauld G."/>
            <person name="Muendlein A."/>
            <person name="Felber R."/>
            <person name="Schnabl S."/>
            <person name="Hiller R."/>
            <person name="Schmidt W."/>
            <person name="Lecharny A."/>
            <person name="Aubourg S."/>
            <person name="Chefdor F."/>
            <person name="Cooke R."/>
            <person name="Berger C."/>
            <person name="Monfort A."/>
            <person name="Casacuberta E."/>
            <person name="Gibbons T."/>
            <person name="Weber N."/>
            <person name="Vandenbol M."/>
            <person name="Bargues M."/>
            <person name="Terol J."/>
            <person name="Torres A."/>
            <person name="Perez-Perez A."/>
            <person name="Purnelle B."/>
            <person name="Bent E."/>
            <person name="Johnson S."/>
            <person name="Tacon D."/>
            <person name="Jesse T."/>
            <person name="Heijnen L."/>
            <person name="Schwarz S."/>
            <person name="Scholler P."/>
            <person name="Heber S."/>
            <person name="Francs P."/>
            <person name="Bielke C."/>
            <person name="Frishman D."/>
            <person name="Haase D."/>
            <person name="Lemcke K."/>
            <person name="Mewes H.-W."/>
            <person name="Stocker S."/>
            <person name="Zaccaria P."/>
            <person name="Bevan M."/>
            <person name="Wilson R.K."/>
            <person name="de la Bastide M."/>
            <person name="Habermann K."/>
            <person name="Parnell L."/>
            <person name="Dedhia N."/>
            <person name="Gnoj L."/>
            <person name="Schutz K."/>
            <person name="Huang E."/>
            <person name="Spiegel L."/>
            <person name="Sekhon M."/>
            <person name="Murray J."/>
            <person name="Sheet P."/>
            <person name="Cordes M."/>
            <person name="Abu-Threideh J."/>
            <person name="Stoneking T."/>
            <person name="Kalicki J."/>
            <person name="Graves T."/>
            <person name="Harmon G."/>
            <person name="Edwards J."/>
            <person name="Latreille P."/>
            <person name="Courtney L."/>
            <person name="Cloud J."/>
            <person name="Abbott A."/>
            <person name="Scott K."/>
            <person name="Johnson D."/>
            <person name="Minx P."/>
            <person name="Bentley D."/>
            <person name="Fulton B."/>
            <person name="Miller N."/>
            <person name="Greco T."/>
            <person name="Kemp K."/>
            <person name="Kramer J."/>
            <person name="Fulton L."/>
            <person name="Mardis E."/>
            <person name="Dante M."/>
            <person name="Pepin K."/>
            <person name="Hillier L.W."/>
            <person name="Nelson J."/>
            <person name="Spieth J."/>
            <person name="Ryan E."/>
            <person name="Andrews S."/>
            <person name="Geisel C."/>
            <person name="Layman D."/>
            <person name="Du H."/>
            <person name="Ali J."/>
            <person name="Berghoff A."/>
            <person name="Jones K."/>
            <person name="Drone K."/>
            <person name="Cotton M."/>
            <person name="Joshu C."/>
            <person name="Antonoiu B."/>
            <person name="Zidanic M."/>
            <person name="Strong C."/>
            <person name="Sun H."/>
            <person name="Lamar B."/>
            <person name="Yordan C."/>
            <person name="Ma P."/>
            <person name="Zhong J."/>
            <person name="Preston R."/>
            <person name="Vil D."/>
            <person name="Shekher M."/>
            <person name="Matero A."/>
            <person name="Shah R."/>
            <person name="Swaby I.K."/>
            <person name="O'Shaughnessy A."/>
            <person name="Rodriguez M."/>
            <person name="Hoffman J."/>
            <person name="Till S."/>
            <person name="Granat S."/>
            <person name="Shohdy N."/>
            <person name="Hasegawa A."/>
            <person name="Hameed A."/>
            <person name="Lodhi M."/>
            <person name="Johnson A."/>
            <person name="Chen E."/>
            <person name="Marra M.A."/>
            <person name="Martienssen R."/>
            <person name="McCombie W.R."/>
        </authorList>
    </citation>
    <scope>NUCLEOTIDE SEQUENCE [LARGE SCALE GENOMIC DNA]</scope>
    <source>
        <strain>cv. Columbia</strain>
    </source>
</reference>
<reference key="4">
    <citation type="journal article" date="2017" name="Plant J.">
        <title>Araport11: a complete reannotation of the Arabidopsis thaliana reference genome.</title>
        <authorList>
            <person name="Cheng C.Y."/>
            <person name="Krishnakumar V."/>
            <person name="Chan A.P."/>
            <person name="Thibaud-Nissen F."/>
            <person name="Schobel S."/>
            <person name="Town C.D."/>
        </authorList>
    </citation>
    <scope>GENOME REANNOTATION</scope>
    <source>
        <strain>cv. Columbia</strain>
    </source>
</reference>
<reference key="5">
    <citation type="journal article" date="2008" name="Plant Mol. Biol.">
        <title>Stay-green protein, defective in Mendel's green cotyledon mutant, acts independent and upstream of pheophorbide a oxygenase in the chlorophyll catabolic pathway.</title>
        <authorList>
            <person name="Aubry S."/>
            <person name="Mani J."/>
            <person name="Hortensteiner S."/>
        </authorList>
    </citation>
    <scope>DISRUPTION PHENOTYPE</scope>
</reference>
<reference key="6">
    <citation type="journal article" date="2013" name="Proc. Natl. Acad. Sci. U.S.A.">
        <title>ABI3 controls embryo degreening through Mendel's I locus.</title>
        <authorList>
            <person name="Delmas F."/>
            <person name="Sankaranarayanan S."/>
            <person name="Deb S."/>
            <person name="Widdup E."/>
            <person name="Bournonville C."/>
            <person name="Bollier N."/>
            <person name="Northey J.G."/>
            <person name="McCourt P."/>
            <person name="Samuel M.A."/>
        </authorList>
    </citation>
    <scope>FUNCTION</scope>
    <scope>DEVELOPMENTAL STAGE</scope>
    <scope>DISRUPTION PHENOTYPE</scope>
</reference>
<reference key="7">
    <citation type="journal article" date="2014" name="Mol. Plant">
        <title>Arabidopsis STAY-GREEN2 is a negative regulator of chlorophyll degradation during leaf senescence.</title>
        <authorList>
            <person name="Sakuraba Y."/>
            <person name="Park S.Y."/>
            <person name="Kim Y.S."/>
            <person name="Wang S.H."/>
            <person name="Yoo S.C."/>
            <person name="Hoertensteiner S."/>
            <person name="Paek N.C."/>
        </authorList>
    </citation>
    <scope>INTERACTION WITH LHCII AND RCCR</scope>
    <scope>SUBCELLULAR LOCATION</scope>
    <scope>INDUCTION</scope>
</reference>
<reference key="8">
    <citation type="journal article" date="2016" name="Mol. Plant">
        <title>NON-YELLOWING2 (NYE2), a close paralog of NYE1, plays a positive role in chlorophyll degradation in Arabidopsis.</title>
        <authorList>
            <person name="Wu S."/>
            <person name="Li Z."/>
            <person name="Yang L."/>
            <person name="Xie Z."/>
            <person name="Chen J."/>
            <person name="Zhang W."/>
            <person name="Liu T."/>
            <person name="Gao S."/>
            <person name="Gao J."/>
            <person name="Zhu Y."/>
            <person name="Xin J."/>
            <person name="Ren G."/>
            <person name="Kuai B."/>
        </authorList>
    </citation>
    <scope>FUNCTION</scope>
    <scope>INTERACTION WITH RCCR</scope>
</reference>
<reference key="9">
    <citation type="journal article" date="2016" name="Plant Cell">
        <title>Arabidopsis STAY-GREEN, Mendel's green cotyledon gene, encodes magnesium-dechelatase.</title>
        <authorList>
            <person name="Shimoda Y."/>
            <person name="Ito H."/>
            <person name="Tanaka A."/>
        </authorList>
    </citation>
    <scope>FUNCTION</scope>
    <scope>CATALYTIC ACTIVITY</scope>
</reference>
<reference key="10">
    <citation type="journal article" date="2017" name="Plant J.">
        <title>NYEs/SGRs-mediated chlorophyll degradation is critical for detoxification during seed maturation in Arabidopsis.</title>
        <authorList>
            <person name="Li Z."/>
            <person name="Wu S."/>
            <person name="Chen J."/>
            <person name="Wang X."/>
            <person name="Gao J."/>
            <person name="Ren G."/>
            <person name="Kuai B."/>
        </authorList>
    </citation>
    <scope>FUNCTION</scope>
</reference>
<keyword id="KW-0881">Chlorophyll catabolism</keyword>
<keyword id="KW-0150">Chloroplast</keyword>
<keyword id="KW-0456">Lyase</keyword>
<keyword id="KW-0472">Membrane</keyword>
<keyword id="KW-0934">Plastid</keyword>
<keyword id="KW-1185">Reference proteome</keyword>
<keyword id="KW-0793">Thylakoid</keyword>
<keyword id="KW-0809">Transit peptide</keyword>
<comment type="function">
    <text evidence="4 6 7 8 14">Magnesium chelatase involved in chlorophyll a degradation in the chlorophyll-protein complexes of photosystem I (PSI) and photosystem II (PSII) (PubMed:26732493, PubMed:27604697). Contributes to the degradation of PSI and PSII in the thylakoid membranes (PubMed:26732493, PubMed:27604697). Required to trigger chlorophyll degradation during natural and dark-induced leaf senescence (Probable) (PubMed:26732493). Mediates chlorophyll degradation during embryo degreening (PubMed:24043799, PubMed:26732493, PubMed:28873256). Recombinant SGR2 possesses high dechelating activity against chlorophyll a, very low activity against chlorophyllide a, and no activity against chlorophyll b (PubMed:27604697).</text>
</comment>
<comment type="catalytic activity">
    <reaction evidence="7">
        <text>chlorophyll a + 2 H(+) = pheophytin a + Mg(2+)</text>
        <dbReference type="Rhea" id="RHEA:52788"/>
        <dbReference type="ChEBI" id="CHEBI:15378"/>
        <dbReference type="ChEBI" id="CHEBI:18420"/>
        <dbReference type="ChEBI" id="CHEBI:58416"/>
        <dbReference type="ChEBI" id="CHEBI:136840"/>
        <dbReference type="EC" id="4.99.1.10"/>
    </reaction>
</comment>
<comment type="subunit">
    <text evidence="5 6">Interacts with the light harvesting complex II (LHCII) (PubMed:24719469). Interacts with the chlorophyll catabolic enzyme (CCE) RCCR (PubMed:24719469, PubMed:26732493).</text>
</comment>
<comment type="subcellular location">
    <subcellularLocation>
        <location evidence="5">Plastid</location>
        <location evidence="5">Chloroplast thylakoid membrane</location>
    </subcellularLocation>
</comment>
<comment type="developmental stage">
    <text evidence="2 4">Constitutively expressed at low level during leaf development, but up-regulated during seed maturation and senescence, when the leaf color changes from green to yellow.</text>
</comment>
<comment type="induction">
    <text evidence="5">Induced during natural and dark-induced leaf senescence.</text>
</comment>
<comment type="disruption phenotype">
    <text evidence="3 4">No effect on seed degreening; probably due to redundancy with SGR1. Sgr1 and sgr2 double mutant has an embryo stay-green phenotype.</text>
</comment>
<comment type="similarity">
    <text evidence="13">Belongs to the staygreen family.</text>
</comment>
<comment type="sequence caution" evidence="13">
    <conflict type="erroneous gene model prediction">
        <sequence resource="EMBL-CDS" id="CAB44329"/>
    </conflict>
</comment>
<comment type="sequence caution" evidence="13">
    <conflict type="erroneous gene model prediction">
        <sequence resource="EMBL-CDS" id="CAB78234"/>
    </conflict>
</comment>
<sequence>MCSLATNLLLPSKMKPVFPEKLSTSSLCVTTRRSKMKNRSIVPVARLFGPAIFEASKLKVLFLGVDEKKHPAKLPRTYTLTHSDITAKLTLAISQSINNSQLQGWANKLFRDEVVGEWKKVKGKMSLHVHCHISGGHFFLNLIAKLRYYIFCKELPVVLEAFAHGDEYLLNNHPELQESPVWVYFHSNIPEYNKVECWGPLWEAMSQHQHDGRTHKKSETLPELPCPDECKCCFPTVSTIPWSHRHYQHTAADENVADGLLEIPNPGKSKG</sequence>